<reference key="1">
    <citation type="journal article" date="2000" name="FEMS Immunol. Med. Microbiol.">
        <title>Human antibody response during sepsis against targets expressed by methicillin resistant Staphylococcus aureus.</title>
        <authorList>
            <person name="Lorenz U."/>
            <person name="Ohlsen K."/>
            <person name="Karch H."/>
            <person name="Hecker M."/>
            <person name="Thiede A."/>
            <person name="Hacker J."/>
        </authorList>
    </citation>
    <scope>NUCLEOTIDE SEQUENCE [GENOMIC DNA]</scope>
    <scope>PROTEIN SEQUENCE OF 30-59</scope>
    <scope>SUBCELLULAR LOCATION</scope>
    <scope>INDUCTION</scope>
    <source>
        <strain>M804</strain>
    </source>
</reference>
<reference key="2">
    <citation type="submission" date="2000-05" db="EMBL/GenBank/DDBJ databases">
        <title>Staphylococcal secretory protein.</title>
        <authorList>
            <person name="Sakata N."/>
            <person name="Wadstrom T."/>
            <person name="Yamazaki K."/>
            <person name="Mukai T."/>
        </authorList>
    </citation>
    <scope>NUCLEOTIDE SEQUENCE [GENOMIC DNA]</scope>
    <source>
        <strain>ATCC 12598 / Cowan 1 / DSM 20372 / NCIMB 11787 / NCTC 8530</strain>
    </source>
</reference>
<reference key="3">
    <citation type="journal article" date="2007" name="FEMS Immunol. Med. Microbiol.">
        <title>Production profile of the soluble lytic transglycosylase homologue in Staphylococcus aureus during bacterial proliferation.</title>
        <authorList>
            <person name="Sakata N."/>
            <person name="Mukai T."/>
        </authorList>
    </citation>
    <scope>INDUCTION</scope>
    <scope>EXPRESSION</scope>
    <source>
        <strain>ATCC 6538P / DSM 346 / JCM 2151 / NBRC 12732 / NCIMB 8625 / NCTC 7447 / NRRL B-313 / FDA 209P</strain>
    </source>
</reference>
<reference key="4">
    <citation type="journal article" date="2007" name="J. Proteome Res.">
        <title>Comparative proteomics analyses reveal a potential biomarker for the detection of vancomycin-intermediate Staphylococcus aureus strains.</title>
        <authorList>
            <person name="Drummelsmith J."/>
            <person name="Winstall E."/>
            <person name="Bergeron M.G."/>
            <person name="Poirier G.G."/>
            <person name="Ouellette M."/>
        </authorList>
    </citation>
    <scope>IDENTIFICATION BY MASS SPECTROMETRY</scope>
    <source>
        <strain>98S-1241</strain>
    </source>
</reference>
<sequence length="233" mass="24203">MKKTIMASSLAVALGVTGYAAGTGHQAHAAEVNVDQAHLVDLAHNHQDQLNAAPIKDGAYDIHFVKDGFQYNFTSNGTTWSWSYEAANGQTAGFSNVAGADYTTSYNQGSNVQSVSYNAQSSNSNVEAVSAPTYHNYSTSTTSSSVRLSNGNTAGATGSSAAQIMAQRTGVSASTWAAIIARESNGQVNAYNPSGASGLFQTMPGWGPTNTVDQQINAAVKAYKAQGLGAWGF</sequence>
<protein>
    <recommendedName>
        <fullName>Probable transglycosylase IsaA</fullName>
        <ecNumber>3.2.-.-</ecNumber>
    </recommendedName>
    <alternativeName>
        <fullName>Immunodominant staphylococcal antigen A</fullName>
    </alternativeName>
    <alternativeName>
        <fullName>SAI-2</fullName>
    </alternativeName>
    <alternativeName>
        <fullName>Secretory protein SAI-B</fullName>
    </alternativeName>
</protein>
<keyword id="KW-0903">Direct protein sequencing</keyword>
<keyword id="KW-0326">Glycosidase</keyword>
<keyword id="KW-0378">Hydrolase</keyword>
<keyword id="KW-0964">Secreted</keyword>
<keyword id="KW-0732">Signal</keyword>
<gene>
    <name type="primary">isaA</name>
</gene>
<feature type="signal peptide" evidence="2">
    <location>
        <begin position="1"/>
        <end position="29"/>
    </location>
</feature>
<feature type="chain" id="PRO_0000021530" description="Probable transglycosylase IsaA">
    <location>
        <begin position="30"/>
        <end position="233"/>
    </location>
</feature>
<feature type="sequence conflict" description="In Ref. 2; BAA95959." evidence="4" ref="2">
    <original>S</original>
    <variation>P</variation>
    <location>
        <position position="172"/>
    </location>
</feature>
<proteinExistence type="evidence at protein level"/>
<evidence type="ECO:0000250" key="1"/>
<evidence type="ECO:0000269" key="2">
    <source>
    </source>
</evidence>
<evidence type="ECO:0000269" key="3">
    <source>
    </source>
</evidence>
<evidence type="ECO:0000305" key="4"/>
<accession>P60158</accession>
<accession>Q9LAB6</accession>
<accession>Q9LBE4</accession>
<organism>
    <name type="scientific">Staphylococcus aureus</name>
    <dbReference type="NCBI Taxonomy" id="1280"/>
    <lineage>
        <taxon>Bacteria</taxon>
        <taxon>Bacillati</taxon>
        <taxon>Bacillota</taxon>
        <taxon>Bacilli</taxon>
        <taxon>Bacillales</taxon>
        <taxon>Staphylococcaceae</taxon>
        <taxon>Staphylococcus</taxon>
    </lineage>
</organism>
<comment type="function">
    <text evidence="1">Is able to cleave peptidoglycan.</text>
</comment>
<comment type="subcellular location">
    <subcellularLocation>
        <location evidence="2">Secreted</location>
    </subcellularLocation>
</comment>
<comment type="induction">
    <text evidence="2 3">Protein expression was detectable in the early exponential growth phase and its concentration constantly increased until the early stationary phase. Gene expression also greatly and rapidly increased during the early exponential growth, about 400-fold increase compared with its level in the cells before inoculation. Subsequently, the number of transcripts was reduced and a constant level was maintained until the last stage of exponential growth phase. In the stationary phase, the number of transcripts gradually decreased.</text>
</comment>
<comment type="similarity">
    <text evidence="4">Belongs to the transglycosylase family. IsaA subfamily.</text>
</comment>
<name>ISAA_STAAU</name>
<dbReference type="EC" id="3.2.-.-"/>
<dbReference type="EMBL" id="AF144681">
    <property type="protein sequence ID" value="AAF66691.1"/>
    <property type="molecule type" value="Genomic_DNA"/>
</dbReference>
<dbReference type="EMBL" id="AB042839">
    <property type="protein sequence ID" value="BAA95959.1"/>
    <property type="molecule type" value="Genomic_DNA"/>
</dbReference>
<dbReference type="RefSeq" id="WP_000751267.1">
    <property type="nucleotide sequence ID" value="NZ_WWFR01000002.1"/>
</dbReference>
<dbReference type="SMR" id="P60158"/>
<dbReference type="OMA" id="MWNTIVM"/>
<dbReference type="GO" id="GO:0005576">
    <property type="term" value="C:extracellular region"/>
    <property type="evidence" value="ECO:0007669"/>
    <property type="project" value="UniProtKB-SubCell"/>
</dbReference>
<dbReference type="GO" id="GO:0016798">
    <property type="term" value="F:hydrolase activity, acting on glycosyl bonds"/>
    <property type="evidence" value="ECO:0007669"/>
    <property type="project" value="UniProtKB-KW"/>
</dbReference>
<dbReference type="Gene3D" id="1.10.530.10">
    <property type="match status" value="1"/>
</dbReference>
<dbReference type="InterPro" id="IPR023346">
    <property type="entry name" value="Lysozyme-like_dom_sf"/>
</dbReference>
<dbReference type="InterPro" id="IPR008258">
    <property type="entry name" value="Transglycosylase_SLT_dom_1"/>
</dbReference>
<dbReference type="Pfam" id="PF01464">
    <property type="entry name" value="SLT"/>
    <property type="match status" value="1"/>
</dbReference>
<dbReference type="SUPFAM" id="SSF53955">
    <property type="entry name" value="Lysozyme-like"/>
    <property type="match status" value="1"/>
</dbReference>